<comment type="function">
    <text evidence="1">Catalyzes the attachment of threonine to tRNA(Thr) in a two-step reaction: L-threonine is first activated by ATP to form Thr-AMP and then transferred to the acceptor end of tRNA(Thr). Also edits incorrectly charged L-seryl-tRNA(Thr).</text>
</comment>
<comment type="catalytic activity">
    <reaction evidence="1">
        <text>tRNA(Thr) + L-threonine + ATP = L-threonyl-tRNA(Thr) + AMP + diphosphate + H(+)</text>
        <dbReference type="Rhea" id="RHEA:24624"/>
        <dbReference type="Rhea" id="RHEA-COMP:9670"/>
        <dbReference type="Rhea" id="RHEA-COMP:9704"/>
        <dbReference type="ChEBI" id="CHEBI:15378"/>
        <dbReference type="ChEBI" id="CHEBI:30616"/>
        <dbReference type="ChEBI" id="CHEBI:33019"/>
        <dbReference type="ChEBI" id="CHEBI:57926"/>
        <dbReference type="ChEBI" id="CHEBI:78442"/>
        <dbReference type="ChEBI" id="CHEBI:78534"/>
        <dbReference type="ChEBI" id="CHEBI:456215"/>
        <dbReference type="EC" id="6.1.1.3"/>
    </reaction>
</comment>
<comment type="cofactor">
    <cofactor evidence="1">
        <name>Zn(2+)</name>
        <dbReference type="ChEBI" id="CHEBI:29105"/>
    </cofactor>
    <text evidence="1">Binds 1 zinc ion per subunit.</text>
</comment>
<comment type="subunit">
    <text evidence="1">Homodimer.</text>
</comment>
<comment type="subcellular location">
    <subcellularLocation>
        <location evidence="1">Cytoplasm</location>
    </subcellularLocation>
</comment>
<comment type="similarity">
    <text evidence="1">Belongs to the class-II aminoacyl-tRNA synthetase family.</text>
</comment>
<sequence length="648" mass="73400">MAQISLTFPDGSTREFDAGVTAGDVAASISTSLRKKAISATVGGAHYDLAWPIHADATIAIHTMQDEEQANELVRHDLAHIMARAVQEIWPETKVTIGPVIKDGWYYDFDRAEAFSPEDLGLIEKKMKEIINKRDPVRTEVWDRARAIAHYEANDEPYKVELINAIPGDEPLRMYWHGDWQDLCRGPHLQHTGQVPGDAFKLMSIAGAYWRGDSDRAMLQRIYGVAFTGKEKLKAHLTMLEEAAKRDHRKLGREMDLFHMQEEAPGQVFWHPNGWSIYTTLQDYMRRKQRAAGYQEVNTPQVVDRKLWEASGHWDKYQEHMFIVEVDEDHAREKAVNALKPMNCPCHVQIFNQGLKSYRDLPLRMAEFGSCNRYEPSGALHGIMRVRGFTQDDGHTFCREDQIEAECAAFITYLSSVYQDLGFEKFEIMFATRPEKRVGSEESWDHVEAALENAIKATGHPYTLDEGEGAFYGPKLDFKLTDAIGREWQCGTFQVDPNLPERLDATYIGQDGAKHRPYMLHRACLGSFERFIGILIENSAGKLPFWLAPRQVVVASIISDADDYVLEVVEKLQAAGVRAEADVRNEKINYKVREHSVGKVPVILAVGAREVEEKTVTLRRLGEKKTSVETLDAVTQALGREATPPDLL</sequence>
<feature type="chain" id="PRO_1000020497" description="Threonine--tRNA ligase">
    <location>
        <begin position="1"/>
        <end position="648"/>
    </location>
</feature>
<feature type="domain" description="TGS" evidence="2">
    <location>
        <begin position="1"/>
        <end position="63"/>
    </location>
</feature>
<feature type="region of interest" description="Catalytic" evidence="1">
    <location>
        <begin position="247"/>
        <end position="544"/>
    </location>
</feature>
<feature type="binding site" evidence="1">
    <location>
        <position position="344"/>
    </location>
    <ligand>
        <name>Zn(2+)</name>
        <dbReference type="ChEBI" id="CHEBI:29105"/>
    </ligand>
</feature>
<feature type="binding site" evidence="1">
    <location>
        <position position="395"/>
    </location>
    <ligand>
        <name>Zn(2+)</name>
        <dbReference type="ChEBI" id="CHEBI:29105"/>
    </ligand>
</feature>
<feature type="binding site" evidence="1">
    <location>
        <position position="521"/>
    </location>
    <ligand>
        <name>Zn(2+)</name>
        <dbReference type="ChEBI" id="CHEBI:29105"/>
    </ligand>
</feature>
<organism>
    <name type="scientific">Roseobacter denitrificans (strain ATCC 33942 / OCh 114)</name>
    <name type="common">Erythrobacter sp. (strain OCh 114)</name>
    <name type="synonym">Roseobacter denitrificans</name>
    <dbReference type="NCBI Taxonomy" id="375451"/>
    <lineage>
        <taxon>Bacteria</taxon>
        <taxon>Pseudomonadati</taxon>
        <taxon>Pseudomonadota</taxon>
        <taxon>Alphaproteobacteria</taxon>
        <taxon>Rhodobacterales</taxon>
        <taxon>Roseobacteraceae</taxon>
        <taxon>Roseobacter</taxon>
    </lineage>
</organism>
<keyword id="KW-0030">Aminoacyl-tRNA synthetase</keyword>
<keyword id="KW-0067">ATP-binding</keyword>
<keyword id="KW-0963">Cytoplasm</keyword>
<keyword id="KW-0436">Ligase</keyword>
<keyword id="KW-0479">Metal-binding</keyword>
<keyword id="KW-0547">Nucleotide-binding</keyword>
<keyword id="KW-0648">Protein biosynthesis</keyword>
<keyword id="KW-1185">Reference proteome</keyword>
<keyword id="KW-0694">RNA-binding</keyword>
<keyword id="KW-0820">tRNA-binding</keyword>
<keyword id="KW-0862">Zinc</keyword>
<protein>
    <recommendedName>
        <fullName evidence="1">Threonine--tRNA ligase</fullName>
        <ecNumber evidence="1">6.1.1.3</ecNumber>
    </recommendedName>
    <alternativeName>
        <fullName evidence="1">Threonyl-tRNA synthetase</fullName>
        <shortName evidence="1">ThrRS</shortName>
    </alternativeName>
</protein>
<accession>Q168U9</accession>
<proteinExistence type="inferred from homology"/>
<dbReference type="EC" id="6.1.1.3" evidence="1"/>
<dbReference type="EMBL" id="CP000362">
    <property type="protein sequence ID" value="ABG31494.1"/>
    <property type="molecule type" value="Genomic_DNA"/>
</dbReference>
<dbReference type="RefSeq" id="WP_011568111.1">
    <property type="nucleotide sequence ID" value="NC_008209.1"/>
</dbReference>
<dbReference type="SMR" id="Q168U9"/>
<dbReference type="STRING" id="375451.RD1_1883"/>
<dbReference type="KEGG" id="rde:RD1_1883"/>
<dbReference type="eggNOG" id="COG0441">
    <property type="taxonomic scope" value="Bacteria"/>
</dbReference>
<dbReference type="HOGENOM" id="CLU_008554_0_1_5"/>
<dbReference type="OrthoDB" id="9802304at2"/>
<dbReference type="Proteomes" id="UP000007029">
    <property type="component" value="Chromosome"/>
</dbReference>
<dbReference type="GO" id="GO:0005737">
    <property type="term" value="C:cytoplasm"/>
    <property type="evidence" value="ECO:0007669"/>
    <property type="project" value="UniProtKB-SubCell"/>
</dbReference>
<dbReference type="GO" id="GO:0005524">
    <property type="term" value="F:ATP binding"/>
    <property type="evidence" value="ECO:0007669"/>
    <property type="project" value="UniProtKB-UniRule"/>
</dbReference>
<dbReference type="GO" id="GO:0046872">
    <property type="term" value="F:metal ion binding"/>
    <property type="evidence" value="ECO:0007669"/>
    <property type="project" value="UniProtKB-KW"/>
</dbReference>
<dbReference type="GO" id="GO:0004829">
    <property type="term" value="F:threonine-tRNA ligase activity"/>
    <property type="evidence" value="ECO:0007669"/>
    <property type="project" value="UniProtKB-UniRule"/>
</dbReference>
<dbReference type="GO" id="GO:0000049">
    <property type="term" value="F:tRNA binding"/>
    <property type="evidence" value="ECO:0007669"/>
    <property type="project" value="UniProtKB-KW"/>
</dbReference>
<dbReference type="GO" id="GO:0006435">
    <property type="term" value="P:threonyl-tRNA aminoacylation"/>
    <property type="evidence" value="ECO:0007669"/>
    <property type="project" value="UniProtKB-UniRule"/>
</dbReference>
<dbReference type="CDD" id="cd01667">
    <property type="entry name" value="TGS_ThrRS"/>
    <property type="match status" value="1"/>
</dbReference>
<dbReference type="CDD" id="cd00860">
    <property type="entry name" value="ThrRS_anticodon"/>
    <property type="match status" value="1"/>
</dbReference>
<dbReference type="CDD" id="cd00771">
    <property type="entry name" value="ThrRS_core"/>
    <property type="match status" value="1"/>
</dbReference>
<dbReference type="FunFam" id="3.30.930.10:FF:000002">
    <property type="entry name" value="Threonine--tRNA ligase"/>
    <property type="match status" value="1"/>
</dbReference>
<dbReference type="FunFam" id="3.40.50.800:FF:000001">
    <property type="entry name" value="Threonine--tRNA ligase"/>
    <property type="match status" value="1"/>
</dbReference>
<dbReference type="Gene3D" id="3.10.20.30">
    <property type="match status" value="1"/>
</dbReference>
<dbReference type="Gene3D" id="3.30.54.20">
    <property type="match status" value="1"/>
</dbReference>
<dbReference type="Gene3D" id="3.40.50.800">
    <property type="entry name" value="Anticodon-binding domain"/>
    <property type="match status" value="1"/>
</dbReference>
<dbReference type="Gene3D" id="3.30.930.10">
    <property type="entry name" value="Bira Bifunctional Protein, Domain 2"/>
    <property type="match status" value="1"/>
</dbReference>
<dbReference type="Gene3D" id="3.30.980.10">
    <property type="entry name" value="Threonyl-trna Synthetase, Chain A, domain 2"/>
    <property type="match status" value="1"/>
</dbReference>
<dbReference type="HAMAP" id="MF_00184">
    <property type="entry name" value="Thr_tRNA_synth"/>
    <property type="match status" value="1"/>
</dbReference>
<dbReference type="InterPro" id="IPR002314">
    <property type="entry name" value="aa-tRNA-synt_IIb"/>
</dbReference>
<dbReference type="InterPro" id="IPR006195">
    <property type="entry name" value="aa-tRNA-synth_II"/>
</dbReference>
<dbReference type="InterPro" id="IPR045864">
    <property type="entry name" value="aa-tRNA-synth_II/BPL/LPL"/>
</dbReference>
<dbReference type="InterPro" id="IPR004154">
    <property type="entry name" value="Anticodon-bd"/>
</dbReference>
<dbReference type="InterPro" id="IPR036621">
    <property type="entry name" value="Anticodon-bd_dom_sf"/>
</dbReference>
<dbReference type="InterPro" id="IPR012675">
    <property type="entry name" value="Beta-grasp_dom_sf"/>
</dbReference>
<dbReference type="InterPro" id="IPR004095">
    <property type="entry name" value="TGS"/>
</dbReference>
<dbReference type="InterPro" id="IPR012676">
    <property type="entry name" value="TGS-like"/>
</dbReference>
<dbReference type="InterPro" id="IPR002320">
    <property type="entry name" value="Thr-tRNA-ligase_IIa"/>
</dbReference>
<dbReference type="InterPro" id="IPR018163">
    <property type="entry name" value="Thr/Ala-tRNA-synth_IIc_edit"/>
</dbReference>
<dbReference type="InterPro" id="IPR047246">
    <property type="entry name" value="ThrRS_anticodon"/>
</dbReference>
<dbReference type="InterPro" id="IPR033728">
    <property type="entry name" value="ThrRS_core"/>
</dbReference>
<dbReference type="InterPro" id="IPR012947">
    <property type="entry name" value="tRNA_SAD"/>
</dbReference>
<dbReference type="NCBIfam" id="TIGR00418">
    <property type="entry name" value="thrS"/>
    <property type="match status" value="1"/>
</dbReference>
<dbReference type="PANTHER" id="PTHR11451:SF44">
    <property type="entry name" value="THREONINE--TRNA LIGASE, CHLOROPLASTIC_MITOCHONDRIAL 2"/>
    <property type="match status" value="1"/>
</dbReference>
<dbReference type="PANTHER" id="PTHR11451">
    <property type="entry name" value="THREONINE-TRNA LIGASE"/>
    <property type="match status" value="1"/>
</dbReference>
<dbReference type="Pfam" id="PF03129">
    <property type="entry name" value="HGTP_anticodon"/>
    <property type="match status" value="1"/>
</dbReference>
<dbReference type="Pfam" id="PF02824">
    <property type="entry name" value="TGS"/>
    <property type="match status" value="1"/>
</dbReference>
<dbReference type="Pfam" id="PF00587">
    <property type="entry name" value="tRNA-synt_2b"/>
    <property type="match status" value="1"/>
</dbReference>
<dbReference type="Pfam" id="PF07973">
    <property type="entry name" value="tRNA_SAD"/>
    <property type="match status" value="1"/>
</dbReference>
<dbReference type="PRINTS" id="PR01047">
    <property type="entry name" value="TRNASYNTHTHR"/>
</dbReference>
<dbReference type="SMART" id="SM00863">
    <property type="entry name" value="tRNA_SAD"/>
    <property type="match status" value="1"/>
</dbReference>
<dbReference type="SUPFAM" id="SSF52954">
    <property type="entry name" value="Class II aaRS ABD-related"/>
    <property type="match status" value="1"/>
</dbReference>
<dbReference type="SUPFAM" id="SSF55681">
    <property type="entry name" value="Class II aaRS and biotin synthetases"/>
    <property type="match status" value="1"/>
</dbReference>
<dbReference type="SUPFAM" id="SSF81271">
    <property type="entry name" value="TGS-like"/>
    <property type="match status" value="1"/>
</dbReference>
<dbReference type="SUPFAM" id="SSF55186">
    <property type="entry name" value="ThrRS/AlaRS common domain"/>
    <property type="match status" value="1"/>
</dbReference>
<dbReference type="PROSITE" id="PS50862">
    <property type="entry name" value="AA_TRNA_LIGASE_II"/>
    <property type="match status" value="1"/>
</dbReference>
<dbReference type="PROSITE" id="PS51880">
    <property type="entry name" value="TGS"/>
    <property type="match status" value="1"/>
</dbReference>
<name>SYT_ROSDO</name>
<gene>
    <name evidence="1" type="primary">thrS</name>
    <name type="ordered locus">RD1_1883</name>
</gene>
<evidence type="ECO:0000255" key="1">
    <source>
        <dbReference type="HAMAP-Rule" id="MF_00184"/>
    </source>
</evidence>
<evidence type="ECO:0000255" key="2">
    <source>
        <dbReference type="PROSITE-ProRule" id="PRU01228"/>
    </source>
</evidence>
<reference key="1">
    <citation type="journal article" date="2007" name="J. Bacteriol.">
        <title>The complete genome sequence of Roseobacter denitrificans reveals a mixotrophic rather than photosynthetic metabolism.</title>
        <authorList>
            <person name="Swingley W.D."/>
            <person name="Sadekar S."/>
            <person name="Mastrian S.D."/>
            <person name="Matthies H.J."/>
            <person name="Hao J."/>
            <person name="Ramos H."/>
            <person name="Acharya C.R."/>
            <person name="Conrad A.L."/>
            <person name="Taylor H.L."/>
            <person name="Dejesa L.C."/>
            <person name="Shah M.K."/>
            <person name="O'Huallachain M.E."/>
            <person name="Lince M.T."/>
            <person name="Blankenship R.E."/>
            <person name="Beatty J.T."/>
            <person name="Touchman J.W."/>
        </authorList>
    </citation>
    <scope>NUCLEOTIDE SEQUENCE [LARGE SCALE GENOMIC DNA]</scope>
    <source>
        <strain>ATCC 33942 / OCh 114</strain>
    </source>
</reference>